<organism>
    <name type="scientific">Oceanobacillus iheyensis (strain DSM 14371 / CIP 107618 / JCM 11309 / KCTC 3954 / HTE831)</name>
    <dbReference type="NCBI Taxonomy" id="221109"/>
    <lineage>
        <taxon>Bacteria</taxon>
        <taxon>Bacillati</taxon>
        <taxon>Bacillota</taxon>
        <taxon>Bacilli</taxon>
        <taxon>Bacillales</taxon>
        <taxon>Bacillaceae</taxon>
        <taxon>Oceanobacillus</taxon>
    </lineage>
</organism>
<evidence type="ECO:0000255" key="1">
    <source>
        <dbReference type="HAMAP-Rule" id="MF_02100"/>
    </source>
</evidence>
<dbReference type="EC" id="2.1.1.-" evidence="1"/>
<dbReference type="EMBL" id="BA000028">
    <property type="protein sequence ID" value="BAC13062.1"/>
    <property type="molecule type" value="Genomic_DNA"/>
</dbReference>
<dbReference type="RefSeq" id="WP_011065507.1">
    <property type="nucleotide sequence ID" value="NC_004193.1"/>
</dbReference>
<dbReference type="SMR" id="Q8CUK1"/>
<dbReference type="STRING" id="221109.gene:10733345"/>
<dbReference type="KEGG" id="oih:OB1106"/>
<dbReference type="eggNOG" id="COG2226">
    <property type="taxonomic scope" value="Bacteria"/>
</dbReference>
<dbReference type="HOGENOM" id="CLU_111961_0_0_9"/>
<dbReference type="OrthoDB" id="465705at2"/>
<dbReference type="PhylomeDB" id="Q8CUK1"/>
<dbReference type="Proteomes" id="UP000000822">
    <property type="component" value="Chromosome"/>
</dbReference>
<dbReference type="GO" id="GO:0008757">
    <property type="term" value="F:S-adenosylmethionine-dependent methyltransferase activity"/>
    <property type="evidence" value="ECO:0007669"/>
    <property type="project" value="UniProtKB-UniRule"/>
</dbReference>
<dbReference type="GO" id="GO:0032259">
    <property type="term" value="P:methylation"/>
    <property type="evidence" value="ECO:0007669"/>
    <property type="project" value="UniProtKB-KW"/>
</dbReference>
<dbReference type="CDD" id="cd02440">
    <property type="entry name" value="AdoMet_MTases"/>
    <property type="match status" value="1"/>
</dbReference>
<dbReference type="Gene3D" id="3.40.50.150">
    <property type="entry name" value="Vaccinia Virus protein VP39"/>
    <property type="match status" value="1"/>
</dbReference>
<dbReference type="HAMAP" id="MF_02100">
    <property type="entry name" value="Methyltr_YrrT"/>
    <property type="match status" value="1"/>
</dbReference>
<dbReference type="InterPro" id="IPR041698">
    <property type="entry name" value="Methyltransf_25"/>
</dbReference>
<dbReference type="InterPro" id="IPR029063">
    <property type="entry name" value="SAM-dependent_MTases_sf"/>
</dbReference>
<dbReference type="InterPro" id="IPR023553">
    <property type="entry name" value="Uncharacterised_MeTfrase_YrrT"/>
</dbReference>
<dbReference type="PANTHER" id="PTHR43861">
    <property type="entry name" value="TRANS-ACONITATE 2-METHYLTRANSFERASE-RELATED"/>
    <property type="match status" value="1"/>
</dbReference>
<dbReference type="Pfam" id="PF13649">
    <property type="entry name" value="Methyltransf_25"/>
    <property type="match status" value="1"/>
</dbReference>
<dbReference type="SUPFAM" id="SSF53335">
    <property type="entry name" value="S-adenosyl-L-methionine-dependent methyltransferases"/>
    <property type="match status" value="1"/>
</dbReference>
<accession>Q8CUK1</accession>
<protein>
    <recommendedName>
        <fullName evidence="1">Uncharacterized methyltransferase OB1106</fullName>
        <ecNumber evidence="1">2.1.1.-</ecNumber>
    </recommendedName>
</protein>
<name>Y1106_OCEIH</name>
<proteinExistence type="inferred from homology"/>
<keyword id="KW-0489">Methyltransferase</keyword>
<keyword id="KW-1185">Reference proteome</keyword>
<keyword id="KW-0949">S-adenosyl-L-methionine</keyword>
<keyword id="KW-0808">Transferase</keyword>
<feature type="chain" id="PRO_0000373855" description="Uncharacterized methyltransferase OB1106">
    <location>
        <begin position="1"/>
        <end position="213"/>
    </location>
</feature>
<feature type="binding site" evidence="1">
    <location>
        <position position="53"/>
    </location>
    <ligand>
        <name>S-adenosyl-L-methionine</name>
        <dbReference type="ChEBI" id="CHEBI:59789"/>
    </ligand>
</feature>
<feature type="binding site" evidence="1">
    <location>
        <position position="74"/>
    </location>
    <ligand>
        <name>S-adenosyl-L-methionine</name>
        <dbReference type="ChEBI" id="CHEBI:59789"/>
    </ligand>
</feature>
<feature type="binding site" evidence="1">
    <location>
        <position position="96"/>
    </location>
    <ligand>
        <name>S-adenosyl-L-methionine</name>
        <dbReference type="ChEBI" id="CHEBI:59789"/>
    </ligand>
</feature>
<comment type="function">
    <text evidence="1">Could be a S-adenosyl-L-methionine-dependent methyltransferase.</text>
</comment>
<comment type="similarity">
    <text evidence="1">Belongs to the methyltransferase superfamily. YrrT family.</text>
</comment>
<gene>
    <name type="ordered locus">OB1106</name>
</gene>
<reference key="1">
    <citation type="journal article" date="2002" name="Nucleic Acids Res.">
        <title>Genome sequence of Oceanobacillus iheyensis isolated from the Iheya Ridge and its unexpected adaptive capabilities to extreme environments.</title>
        <authorList>
            <person name="Takami H."/>
            <person name="Takaki Y."/>
            <person name="Uchiyama I."/>
        </authorList>
    </citation>
    <scope>NUCLEOTIDE SEQUENCE [LARGE SCALE GENOMIC DNA]</scope>
    <source>
        <strain>DSM 14371 / CIP 107618 / JCM 11309 / KCTC 3954 / HTE831</strain>
    </source>
</reference>
<sequence length="213" mass="24440">MGREFIDIFEDWAPLYDDSVTGKDAQYEKVFEHYDQILSEVVENSQDKVLEFGVGTGNLTKQLLNAGKTVIGIEPSTAMREIAKKKLPGITILDGDFINFPTLTMPIDSIVSTYAFHHLTDEEKEQAIKQFHEVLQPEGMVVFGDTMFETKEAKQNQIDLARKQGFKALAEDLEREYYPIIKTVRNAFEKYNFHVSFKQMNDFVWIISAKKLA</sequence>